<sequence>MEPGLQQAGSCGAPSPDPAMQVQPGSVASPWRSTRPWRSTSRSYFYLSTTALVCLVVAVAIILVLVVQKKDSTPNTTEKAPLKGGNCSEDLFCTLKSTPSKKSWAYLQVSKHLNNTKLSWNEDGTIHGLIYQDGNLIVQFPGLYFIVCQLQFLVQCSNHSVDLTLQLLINSKIKKQTLVTVCESGVQSKNIYQNLSQFLLHYLQVNSTISVRVDNFQYVDTNTFPLDNVLSVFLYSSSD</sequence>
<dbReference type="EMBL" id="L09754">
    <property type="protein sequence ID" value="AAA74595.1"/>
    <property type="molecule type" value="mRNA"/>
</dbReference>
<dbReference type="CCDS" id="CCDS18264.1"/>
<dbReference type="PIR" id="B40710">
    <property type="entry name" value="B40710"/>
</dbReference>
<dbReference type="RefSeq" id="NP_033429.1">
    <property type="nucleotide sequence ID" value="NM_009403.3"/>
</dbReference>
<dbReference type="SMR" id="P32972"/>
<dbReference type="FunCoup" id="P32972">
    <property type="interactions" value="314"/>
</dbReference>
<dbReference type="STRING" id="10090.ENSMUSP00000030047"/>
<dbReference type="GlyCosmos" id="P32972">
    <property type="glycosylation" value="6 sites, No reported glycans"/>
</dbReference>
<dbReference type="GlyGen" id="P32972">
    <property type="glycosylation" value="6 sites, 1 N-linked glycan (1 site)"/>
</dbReference>
<dbReference type="PhosphoSitePlus" id="P32972"/>
<dbReference type="PaxDb" id="10090-ENSMUSP00000030047"/>
<dbReference type="Antibodypedia" id="15592">
    <property type="antibodies" value="489 antibodies from 30 providers"/>
</dbReference>
<dbReference type="DNASU" id="21949"/>
<dbReference type="Ensembl" id="ENSMUST00000030047.3">
    <property type="protein sequence ID" value="ENSMUSP00000030047.3"/>
    <property type="gene ID" value="ENSMUSG00000028362.3"/>
</dbReference>
<dbReference type="GeneID" id="21949"/>
<dbReference type="KEGG" id="mmu:21949"/>
<dbReference type="UCSC" id="uc008thd.1">
    <property type="organism name" value="mouse"/>
</dbReference>
<dbReference type="AGR" id="MGI:88328"/>
<dbReference type="CTD" id="944"/>
<dbReference type="MGI" id="MGI:88328">
    <property type="gene designation" value="Tnfsf8"/>
</dbReference>
<dbReference type="VEuPathDB" id="HostDB:ENSMUSG00000028362"/>
<dbReference type="eggNOG" id="ENOG502S54A">
    <property type="taxonomic scope" value="Eukaryota"/>
</dbReference>
<dbReference type="GeneTree" id="ENSGT00390000011719"/>
<dbReference type="HOGENOM" id="CLU_102229_0_0_1"/>
<dbReference type="InParanoid" id="P32972"/>
<dbReference type="OMA" id="LVQCSNH"/>
<dbReference type="OrthoDB" id="9908372at2759"/>
<dbReference type="PhylomeDB" id="P32972"/>
<dbReference type="TreeFam" id="TF335780"/>
<dbReference type="Reactome" id="R-MMU-5669034">
    <property type="pathway name" value="TNFs bind their physiological receptors"/>
</dbReference>
<dbReference type="BioGRID-ORCS" id="21949">
    <property type="hits" value="2 hits in 77 CRISPR screens"/>
</dbReference>
<dbReference type="ChiTaRS" id="Tnfsf8">
    <property type="organism name" value="mouse"/>
</dbReference>
<dbReference type="PRO" id="PR:P32972"/>
<dbReference type="Proteomes" id="UP000000589">
    <property type="component" value="Chromosome 4"/>
</dbReference>
<dbReference type="RNAct" id="P32972">
    <property type="molecule type" value="protein"/>
</dbReference>
<dbReference type="Bgee" id="ENSMUSG00000028362">
    <property type="expression patterns" value="Expressed in kidney vasculature and 17 other cell types or tissues"/>
</dbReference>
<dbReference type="ExpressionAtlas" id="P32972">
    <property type="expression patterns" value="baseline and differential"/>
</dbReference>
<dbReference type="GO" id="GO:0005615">
    <property type="term" value="C:extracellular space"/>
    <property type="evidence" value="ECO:0007669"/>
    <property type="project" value="UniProtKB-KW"/>
</dbReference>
<dbReference type="GO" id="GO:0016020">
    <property type="term" value="C:membrane"/>
    <property type="evidence" value="ECO:0007669"/>
    <property type="project" value="UniProtKB-SubCell"/>
</dbReference>
<dbReference type="GO" id="GO:0005125">
    <property type="term" value="F:cytokine activity"/>
    <property type="evidence" value="ECO:0007669"/>
    <property type="project" value="UniProtKB-KW"/>
</dbReference>
<dbReference type="GO" id="GO:0005164">
    <property type="term" value="F:tumor necrosis factor receptor binding"/>
    <property type="evidence" value="ECO:0007669"/>
    <property type="project" value="InterPro"/>
</dbReference>
<dbReference type="GO" id="GO:0043374">
    <property type="term" value="P:CD8-positive, alpha-beta T cell differentiation"/>
    <property type="evidence" value="ECO:0000315"/>
    <property type="project" value="MGI"/>
</dbReference>
<dbReference type="GO" id="GO:0050830">
    <property type="term" value="P:defense response to Gram-positive bacterium"/>
    <property type="evidence" value="ECO:0000315"/>
    <property type="project" value="MGI"/>
</dbReference>
<dbReference type="GO" id="GO:0006955">
    <property type="term" value="P:immune response"/>
    <property type="evidence" value="ECO:0007669"/>
    <property type="project" value="InterPro"/>
</dbReference>
<dbReference type="GO" id="GO:0045944">
    <property type="term" value="P:positive regulation of transcription by RNA polymerase II"/>
    <property type="evidence" value="ECO:0000314"/>
    <property type="project" value="MGI"/>
</dbReference>
<dbReference type="CDD" id="cd00184">
    <property type="entry name" value="TNF"/>
    <property type="match status" value="1"/>
</dbReference>
<dbReference type="FunFam" id="2.60.120.40:FF:000023">
    <property type="entry name" value="tumor necrosis factor ligand superfamily member 8"/>
    <property type="match status" value="1"/>
</dbReference>
<dbReference type="Gene3D" id="2.60.120.40">
    <property type="match status" value="1"/>
</dbReference>
<dbReference type="InterPro" id="IPR021185">
    <property type="entry name" value="TNF_CD30_ligand_type"/>
</dbReference>
<dbReference type="InterPro" id="IPR021184">
    <property type="entry name" value="TNF_CS"/>
</dbReference>
<dbReference type="InterPro" id="IPR006052">
    <property type="entry name" value="TNF_dom"/>
</dbReference>
<dbReference type="InterPro" id="IPR053104">
    <property type="entry name" value="TNF_ligand_SF_member_8"/>
</dbReference>
<dbReference type="InterPro" id="IPR008983">
    <property type="entry name" value="Tumour_necrosis_fac-like_dom"/>
</dbReference>
<dbReference type="PANTHER" id="PTHR32163">
    <property type="entry name" value="TUMOR NECROSIS FACTOR LIGAND SUPERFAMILY MEMBER 8"/>
    <property type="match status" value="1"/>
</dbReference>
<dbReference type="PANTHER" id="PTHR32163:SF1">
    <property type="entry name" value="TUMOR NECROSIS FACTOR LIGAND SUPERFAMILY MEMBER 8"/>
    <property type="match status" value="1"/>
</dbReference>
<dbReference type="Pfam" id="PF00229">
    <property type="entry name" value="TNF"/>
    <property type="match status" value="1"/>
</dbReference>
<dbReference type="PIRSF" id="PIRSF019548">
    <property type="entry name" value="TNF_CD30_ligand_type"/>
    <property type="match status" value="1"/>
</dbReference>
<dbReference type="SMART" id="SM00207">
    <property type="entry name" value="TNF"/>
    <property type="match status" value="1"/>
</dbReference>
<dbReference type="SUPFAM" id="SSF49842">
    <property type="entry name" value="TNF-like"/>
    <property type="match status" value="1"/>
</dbReference>
<dbReference type="PROSITE" id="PS00251">
    <property type="entry name" value="THD_1"/>
    <property type="match status" value="1"/>
</dbReference>
<dbReference type="PROSITE" id="PS50049">
    <property type="entry name" value="THD_2"/>
    <property type="match status" value="1"/>
</dbReference>
<feature type="chain" id="PRO_0000185500" description="Tumor necrosis factor ligand superfamily member 8">
    <location>
        <begin position="1"/>
        <end position="239"/>
    </location>
</feature>
<feature type="topological domain" description="Cytoplasmic" evidence="1">
    <location>
        <begin position="1"/>
        <end position="43"/>
    </location>
</feature>
<feature type="transmembrane region" description="Helical; Signal-anchor for type II membrane protein" evidence="1">
    <location>
        <begin position="44"/>
        <end position="67"/>
    </location>
</feature>
<feature type="topological domain" description="Extracellular" evidence="1">
    <location>
        <begin position="68"/>
        <end position="239"/>
    </location>
</feature>
<feature type="domain" description="THD" evidence="2">
    <location>
        <begin position="103"/>
        <end position="230"/>
    </location>
</feature>
<feature type="region of interest" description="Disordered" evidence="3">
    <location>
        <begin position="1"/>
        <end position="36"/>
    </location>
</feature>
<feature type="glycosylation site" description="N-linked (GlcNAc...) asparagine" evidence="1">
    <location>
        <position position="75"/>
    </location>
</feature>
<feature type="glycosylation site" description="N-linked (GlcNAc...) asparagine" evidence="1">
    <location>
        <position position="86"/>
    </location>
</feature>
<feature type="glycosylation site" description="N-linked (GlcNAc...) asparagine" evidence="1">
    <location>
        <position position="114"/>
    </location>
</feature>
<feature type="glycosylation site" description="N-linked (GlcNAc...) asparagine" evidence="1">
    <location>
        <position position="158"/>
    </location>
</feature>
<feature type="glycosylation site" description="N-linked (GlcNAc...) asparagine" evidence="1">
    <location>
        <position position="194"/>
    </location>
</feature>
<feature type="glycosylation site" description="N-linked (GlcNAc...) asparagine" evidence="1">
    <location>
        <position position="206"/>
    </location>
</feature>
<feature type="disulfide bond" evidence="2">
    <location>
        <begin position="156"/>
        <end position="182"/>
    </location>
</feature>
<proteinExistence type="evidence at transcript level"/>
<comment type="function">
    <text>Cytokine that binds to TNFRSF8/CD30. Induces proliferation of T-cells.</text>
</comment>
<comment type="subunit">
    <text evidence="4">Homotrimer.</text>
</comment>
<comment type="subcellular location">
    <subcellularLocation>
        <location>Membrane</location>
        <topology>Single-pass type II membrane protein</topology>
    </subcellularLocation>
</comment>
<comment type="similarity">
    <text evidence="4">Belongs to the tumor necrosis factor family.</text>
</comment>
<evidence type="ECO:0000255" key="1"/>
<evidence type="ECO:0000255" key="2">
    <source>
        <dbReference type="PROSITE-ProRule" id="PRU01387"/>
    </source>
</evidence>
<evidence type="ECO:0000256" key="3">
    <source>
        <dbReference type="SAM" id="MobiDB-lite"/>
    </source>
</evidence>
<evidence type="ECO:0000305" key="4"/>
<organism>
    <name type="scientific">Mus musculus</name>
    <name type="common">Mouse</name>
    <dbReference type="NCBI Taxonomy" id="10090"/>
    <lineage>
        <taxon>Eukaryota</taxon>
        <taxon>Metazoa</taxon>
        <taxon>Chordata</taxon>
        <taxon>Craniata</taxon>
        <taxon>Vertebrata</taxon>
        <taxon>Euteleostomi</taxon>
        <taxon>Mammalia</taxon>
        <taxon>Eutheria</taxon>
        <taxon>Euarchontoglires</taxon>
        <taxon>Glires</taxon>
        <taxon>Rodentia</taxon>
        <taxon>Myomorpha</taxon>
        <taxon>Muroidea</taxon>
        <taxon>Muridae</taxon>
        <taxon>Murinae</taxon>
        <taxon>Mus</taxon>
        <taxon>Mus</taxon>
    </lineage>
</organism>
<keyword id="KW-0202">Cytokine</keyword>
<keyword id="KW-1015">Disulfide bond</keyword>
<keyword id="KW-0325">Glycoprotein</keyword>
<keyword id="KW-0472">Membrane</keyword>
<keyword id="KW-1185">Reference proteome</keyword>
<keyword id="KW-0735">Signal-anchor</keyword>
<keyword id="KW-0812">Transmembrane</keyword>
<keyword id="KW-1133">Transmembrane helix</keyword>
<accession>P32972</accession>
<reference key="1">
    <citation type="journal article" date="1993" name="Cell">
        <title>CD30 antigen, a marker for Hodgkin's lymphoma, is a receptor whose ligand defines an emerging family of cytokines with homology to TNF.</title>
        <authorList>
            <person name="Smith C.A."/>
            <person name="Gruess H.-J."/>
            <person name="Davis T."/>
            <person name="Anderson D."/>
            <person name="Farrah T."/>
            <person name="Baker E."/>
            <person name="Sutherland G.R."/>
            <person name="Brannan C.I."/>
            <person name="Copeland N.G."/>
            <person name="Jenkins N.A."/>
            <person name="Grabstein K.H."/>
            <person name="Gliniak B."/>
            <person name="McAlister I.B."/>
            <person name="Fanslow W."/>
            <person name="Alderson M."/>
            <person name="Falk B."/>
            <person name="Gimpsel S."/>
            <person name="Gillis S."/>
            <person name="Din W.S."/>
            <person name="Goodwin R.G."/>
            <person name="Armitage R.J."/>
        </authorList>
    </citation>
    <scope>NUCLEOTIDE SEQUENCE [MRNA]</scope>
    <source>
        <tissue>T-cell</tissue>
    </source>
</reference>
<name>TNFL8_MOUSE</name>
<gene>
    <name type="primary">Tnfsf8</name>
    <name type="synonym">Cd30l</name>
    <name type="synonym">Cd30lg</name>
</gene>
<protein>
    <recommendedName>
        <fullName>Tumor necrosis factor ligand superfamily member 8</fullName>
    </recommendedName>
    <alternativeName>
        <fullName>CD30 ligand</fullName>
        <shortName>CD30-L</shortName>
    </alternativeName>
    <cdAntigenName>CD153</cdAntigenName>
</protein>